<organism>
    <name type="scientific">Escherichia coli (strain ATCC 8739 / DSM 1576 / NBRC 3972 / NCIMB 8545 / WDCM 00012 / Crooks)</name>
    <dbReference type="NCBI Taxonomy" id="481805"/>
    <lineage>
        <taxon>Bacteria</taxon>
        <taxon>Pseudomonadati</taxon>
        <taxon>Pseudomonadota</taxon>
        <taxon>Gammaproteobacteria</taxon>
        <taxon>Enterobacterales</taxon>
        <taxon>Enterobacteriaceae</taxon>
        <taxon>Escherichia</taxon>
    </lineage>
</organism>
<accession>B1IUR1</accession>
<evidence type="ECO:0000255" key="1">
    <source>
        <dbReference type="HAMAP-Rule" id="MF_00368"/>
    </source>
</evidence>
<evidence type="ECO:0000305" key="2"/>
<reference key="1">
    <citation type="submission" date="2008-02" db="EMBL/GenBank/DDBJ databases">
        <title>Complete sequence of Escherichia coli C str. ATCC 8739.</title>
        <authorList>
            <person name="Copeland A."/>
            <person name="Lucas S."/>
            <person name="Lapidus A."/>
            <person name="Glavina del Rio T."/>
            <person name="Dalin E."/>
            <person name="Tice H."/>
            <person name="Bruce D."/>
            <person name="Goodwin L."/>
            <person name="Pitluck S."/>
            <person name="Kiss H."/>
            <person name="Brettin T."/>
            <person name="Detter J.C."/>
            <person name="Han C."/>
            <person name="Kuske C.R."/>
            <person name="Schmutz J."/>
            <person name="Larimer F."/>
            <person name="Land M."/>
            <person name="Hauser L."/>
            <person name="Kyrpides N."/>
            <person name="Mikhailova N."/>
            <person name="Ingram L."/>
            <person name="Richardson P."/>
        </authorList>
    </citation>
    <scope>NUCLEOTIDE SEQUENCE [LARGE SCALE GENOMIC DNA]</scope>
    <source>
        <strain>ATCC 8739 / DSM 1576 / NBRC 3972 / NCIMB 8545 / WDCM 00012 / Crooks</strain>
    </source>
</reference>
<gene>
    <name evidence="1" type="primary">rplL</name>
    <name type="ordered locus">EcolC_4039</name>
</gene>
<protein>
    <recommendedName>
        <fullName evidence="1">Large ribosomal subunit protein bL12</fullName>
    </recommendedName>
    <alternativeName>
        <fullName evidence="2">50S ribosomal protein L7/L12</fullName>
    </alternativeName>
</protein>
<sequence>MSITKDQIIEAVAAMSVMDVVELISAMEEKFGVSAAAAVAVAAGPVEAAEEKTEFDVILKAAGANKVAVIKAVRGATGLGLKEAKDLVESAPAALKEGVSKDDAEALKKALEEAGAEVEVK</sequence>
<comment type="function">
    <text evidence="1">Forms part of the ribosomal stalk which helps the ribosome interact with GTP-bound translation factors. Is thus essential for accurate translation.</text>
</comment>
<comment type="subunit">
    <text evidence="1">Homodimer. Part of the ribosomal stalk of the 50S ribosomal subunit. Forms a multimeric L10(L12)X complex, where L10 forms an elongated spine to which 2 to 4 L12 dimers bind in a sequential fashion. Binds GTP-bound translation factors.</text>
</comment>
<comment type="similarity">
    <text evidence="1">Belongs to the bacterial ribosomal protein bL12 family.</text>
</comment>
<name>RL7_ECOLC</name>
<proteinExistence type="inferred from homology"/>
<dbReference type="EMBL" id="CP000946">
    <property type="protein sequence ID" value="ACA79638.1"/>
    <property type="molecule type" value="Genomic_DNA"/>
</dbReference>
<dbReference type="RefSeq" id="WP_000028878.1">
    <property type="nucleotide sequence ID" value="NZ_MTFT01000025.1"/>
</dbReference>
<dbReference type="SMR" id="B1IUR1"/>
<dbReference type="GeneID" id="86944525"/>
<dbReference type="KEGG" id="ecl:EcolC_4039"/>
<dbReference type="HOGENOM" id="CLU_086499_3_2_6"/>
<dbReference type="GO" id="GO:0022625">
    <property type="term" value="C:cytosolic large ribosomal subunit"/>
    <property type="evidence" value="ECO:0007669"/>
    <property type="project" value="TreeGrafter"/>
</dbReference>
<dbReference type="GO" id="GO:0003729">
    <property type="term" value="F:mRNA binding"/>
    <property type="evidence" value="ECO:0007669"/>
    <property type="project" value="TreeGrafter"/>
</dbReference>
<dbReference type="GO" id="GO:0003735">
    <property type="term" value="F:structural constituent of ribosome"/>
    <property type="evidence" value="ECO:0007669"/>
    <property type="project" value="InterPro"/>
</dbReference>
<dbReference type="GO" id="GO:0006412">
    <property type="term" value="P:translation"/>
    <property type="evidence" value="ECO:0007669"/>
    <property type="project" value="UniProtKB-UniRule"/>
</dbReference>
<dbReference type="CDD" id="cd00387">
    <property type="entry name" value="Ribosomal_L7_L12"/>
    <property type="match status" value="1"/>
</dbReference>
<dbReference type="FunFam" id="1.20.5.710:FF:000001">
    <property type="entry name" value="50S ribosomal protein L7/L12"/>
    <property type="match status" value="1"/>
</dbReference>
<dbReference type="FunFam" id="3.30.1390.10:FF:000001">
    <property type="entry name" value="50S ribosomal protein L7/L12"/>
    <property type="match status" value="1"/>
</dbReference>
<dbReference type="Gene3D" id="3.30.1390.10">
    <property type="match status" value="1"/>
</dbReference>
<dbReference type="Gene3D" id="1.20.5.710">
    <property type="entry name" value="Single helix bin"/>
    <property type="match status" value="1"/>
</dbReference>
<dbReference type="HAMAP" id="MF_00368">
    <property type="entry name" value="Ribosomal_bL12"/>
    <property type="match status" value="1"/>
</dbReference>
<dbReference type="InterPro" id="IPR000206">
    <property type="entry name" value="Ribosomal_bL12"/>
</dbReference>
<dbReference type="InterPro" id="IPR013823">
    <property type="entry name" value="Ribosomal_bL12_C"/>
</dbReference>
<dbReference type="InterPro" id="IPR014719">
    <property type="entry name" value="Ribosomal_bL12_C/ClpS-like"/>
</dbReference>
<dbReference type="InterPro" id="IPR008932">
    <property type="entry name" value="Ribosomal_bL12_oligo"/>
</dbReference>
<dbReference type="InterPro" id="IPR036235">
    <property type="entry name" value="Ribosomal_bL12_oligo_N_sf"/>
</dbReference>
<dbReference type="NCBIfam" id="TIGR00855">
    <property type="entry name" value="L12"/>
    <property type="match status" value="1"/>
</dbReference>
<dbReference type="PANTHER" id="PTHR45987">
    <property type="entry name" value="39S RIBOSOMAL PROTEIN L12"/>
    <property type="match status" value="1"/>
</dbReference>
<dbReference type="PANTHER" id="PTHR45987:SF4">
    <property type="entry name" value="LARGE RIBOSOMAL SUBUNIT PROTEIN BL12M"/>
    <property type="match status" value="1"/>
</dbReference>
<dbReference type="Pfam" id="PF00542">
    <property type="entry name" value="Ribosomal_L12"/>
    <property type="match status" value="1"/>
</dbReference>
<dbReference type="Pfam" id="PF16320">
    <property type="entry name" value="Ribosomal_L12_N"/>
    <property type="match status" value="1"/>
</dbReference>
<dbReference type="SUPFAM" id="SSF54736">
    <property type="entry name" value="ClpS-like"/>
    <property type="match status" value="1"/>
</dbReference>
<dbReference type="SUPFAM" id="SSF48300">
    <property type="entry name" value="Ribosomal protein L7/12, oligomerisation (N-terminal) domain"/>
    <property type="match status" value="1"/>
</dbReference>
<feature type="chain" id="PRO_1000079793" description="Large ribosomal subunit protein bL12">
    <location>
        <begin position="1"/>
        <end position="121"/>
    </location>
</feature>
<keyword id="KW-0687">Ribonucleoprotein</keyword>
<keyword id="KW-0689">Ribosomal protein</keyword>